<gene>
    <name type="primary">DYN3</name>
    <name type="ordered locus">CAGL0M13695g</name>
</gene>
<dbReference type="EMBL" id="CR380959">
    <property type="protein sequence ID" value="CAG62919.1"/>
    <property type="molecule type" value="Genomic_DNA"/>
</dbReference>
<dbReference type="RefSeq" id="XP_449939.1">
    <property type="nucleotide sequence ID" value="XM_449939.1"/>
</dbReference>
<dbReference type="SMR" id="Q6FIK5"/>
<dbReference type="FunCoup" id="Q6FIK5">
    <property type="interactions" value="50"/>
</dbReference>
<dbReference type="STRING" id="284593.Q6FIK5"/>
<dbReference type="EnsemblFungi" id="CAGL0M13695g-T">
    <property type="protein sequence ID" value="CAGL0M13695g-T-p1"/>
    <property type="gene ID" value="CAGL0M13695g"/>
</dbReference>
<dbReference type="KEGG" id="cgr:2891230"/>
<dbReference type="CGD" id="CAL0137025">
    <property type="gene designation" value="CAGL0M13695g"/>
</dbReference>
<dbReference type="VEuPathDB" id="FungiDB:B1J91_M13695g"/>
<dbReference type="VEuPathDB" id="FungiDB:CAGL0M13695g"/>
<dbReference type="eggNOG" id="ENOG502S4QG">
    <property type="taxonomic scope" value="Eukaryota"/>
</dbReference>
<dbReference type="HOGENOM" id="CLU_064762_0_0_1"/>
<dbReference type="InParanoid" id="Q6FIK5"/>
<dbReference type="OMA" id="QIRWIFL"/>
<dbReference type="Proteomes" id="UP000002428">
    <property type="component" value="Chromosome M"/>
</dbReference>
<dbReference type="GO" id="GO:0005737">
    <property type="term" value="C:cytoplasm"/>
    <property type="evidence" value="ECO:0007669"/>
    <property type="project" value="UniProtKB-KW"/>
</dbReference>
<dbReference type="GO" id="GO:0030286">
    <property type="term" value="C:dynein complex"/>
    <property type="evidence" value="ECO:0007669"/>
    <property type="project" value="UniProtKB-KW"/>
</dbReference>
<dbReference type="GO" id="GO:0005874">
    <property type="term" value="C:microtubule"/>
    <property type="evidence" value="ECO:0007669"/>
    <property type="project" value="UniProtKB-KW"/>
</dbReference>
<reference key="1">
    <citation type="journal article" date="2004" name="Nature">
        <title>Genome evolution in yeasts.</title>
        <authorList>
            <person name="Dujon B."/>
            <person name="Sherman D."/>
            <person name="Fischer G."/>
            <person name="Durrens P."/>
            <person name="Casaregola S."/>
            <person name="Lafontaine I."/>
            <person name="de Montigny J."/>
            <person name="Marck C."/>
            <person name="Neuveglise C."/>
            <person name="Talla E."/>
            <person name="Goffard N."/>
            <person name="Frangeul L."/>
            <person name="Aigle M."/>
            <person name="Anthouard V."/>
            <person name="Babour A."/>
            <person name="Barbe V."/>
            <person name="Barnay S."/>
            <person name="Blanchin S."/>
            <person name="Beckerich J.-M."/>
            <person name="Beyne E."/>
            <person name="Bleykasten C."/>
            <person name="Boisrame A."/>
            <person name="Boyer J."/>
            <person name="Cattolico L."/>
            <person name="Confanioleri F."/>
            <person name="de Daruvar A."/>
            <person name="Despons L."/>
            <person name="Fabre E."/>
            <person name="Fairhead C."/>
            <person name="Ferry-Dumazet H."/>
            <person name="Groppi A."/>
            <person name="Hantraye F."/>
            <person name="Hennequin C."/>
            <person name="Jauniaux N."/>
            <person name="Joyet P."/>
            <person name="Kachouri R."/>
            <person name="Kerrest A."/>
            <person name="Koszul R."/>
            <person name="Lemaire M."/>
            <person name="Lesur I."/>
            <person name="Ma L."/>
            <person name="Muller H."/>
            <person name="Nicaud J.-M."/>
            <person name="Nikolski M."/>
            <person name="Oztas S."/>
            <person name="Ozier-Kalogeropoulos O."/>
            <person name="Pellenz S."/>
            <person name="Potier S."/>
            <person name="Richard G.-F."/>
            <person name="Straub M.-L."/>
            <person name="Suleau A."/>
            <person name="Swennen D."/>
            <person name="Tekaia F."/>
            <person name="Wesolowski-Louvel M."/>
            <person name="Westhof E."/>
            <person name="Wirth B."/>
            <person name="Zeniou-Meyer M."/>
            <person name="Zivanovic Y."/>
            <person name="Bolotin-Fukuhara M."/>
            <person name="Thierry A."/>
            <person name="Bouchier C."/>
            <person name="Caudron B."/>
            <person name="Scarpelli C."/>
            <person name="Gaillardin C."/>
            <person name="Weissenbach J."/>
            <person name="Wincker P."/>
            <person name="Souciet J.-L."/>
        </authorList>
    </citation>
    <scope>NUCLEOTIDE SEQUENCE [LARGE SCALE GENOMIC DNA]</scope>
    <source>
        <strain>ATCC 2001 / BCRC 20586 / JCM 3761 / NBRC 0622 / NRRL Y-65 / CBS 138</strain>
    </source>
</reference>
<name>DYN3_CANGA</name>
<organism>
    <name type="scientific">Candida glabrata (strain ATCC 2001 / BCRC 20586 / JCM 3761 / NBRC 0622 / NRRL Y-65 / CBS 138)</name>
    <name type="common">Yeast</name>
    <name type="synonym">Nakaseomyces glabratus</name>
    <dbReference type="NCBI Taxonomy" id="284593"/>
    <lineage>
        <taxon>Eukaryota</taxon>
        <taxon>Fungi</taxon>
        <taxon>Dikarya</taxon>
        <taxon>Ascomycota</taxon>
        <taxon>Saccharomycotina</taxon>
        <taxon>Saccharomycetes</taxon>
        <taxon>Saccharomycetales</taxon>
        <taxon>Saccharomycetaceae</taxon>
        <taxon>Nakaseomyces</taxon>
    </lineage>
</organism>
<keyword id="KW-0963">Cytoplasm</keyword>
<keyword id="KW-0206">Cytoskeleton</keyword>
<keyword id="KW-0243">Dynein</keyword>
<keyword id="KW-0493">Microtubule</keyword>
<keyword id="KW-0505">Motor protein</keyword>
<keyword id="KW-1185">Reference proteome</keyword>
<protein>
    <recommendedName>
        <fullName>Cytoplasmic dynein intermediate light chain DYN3</fullName>
        <shortName>Dynein protein 3</shortName>
    </recommendedName>
</protein>
<sequence>MLRRALEEKYALKIGEIRTTTAVICSISTDTILDFEKQCLKPHCTFSKPIINLGYTYYDIPSEYKEELNESIAVNHRIDAYALITTFDETPIESIEPLISNDKSEIKWTFLLDWTELHQGTWLRFLSKQFESLESKGYDLKNENISVWCMNSDYMFELQKNDILWESFHFEYLQQSLRSVLFYRNGSLIYVDKKRNQLPLFEIFVKLCLHNRNDKYKSLNQFTEMSETSQVFIPFNSDSEDLIKTIDEEFQPEEVLKPDFMPTFEKVIPYSKPKDEPHLPPIGELPHFDMNKELEEAAIILKQASKKEAYAKQNI</sequence>
<feature type="chain" id="PRO_0000292444" description="Cytoplasmic dynein intermediate light chain DYN3">
    <location>
        <begin position="1"/>
        <end position="315"/>
    </location>
</feature>
<proteinExistence type="inferred from homology"/>
<accession>Q6FIK5</accession>
<comment type="function">
    <text evidence="1">Component of the cytoplasmic dynein which acts as a motor for the intracellular retrograde motility of vesicles and organelles along microtubules. May play an important role in the proper orientation of the mitotic spindle into the budding daughter cell yeast. Probably required for normal progression of the cell cycle (By similarity).</text>
</comment>
<comment type="subunit">
    <text evidence="1">The cytoplasmic dynein is composed of at least two heavy chains and a number of intermediate and light chains.</text>
</comment>
<comment type="subcellular location">
    <subcellularLocation>
        <location evidence="1">Cytoplasm</location>
        <location evidence="1">Cytoskeleton</location>
    </subcellularLocation>
</comment>
<comment type="similarity">
    <text evidence="2">Belongs to the dynein light intermediate chain DYN3 family.</text>
</comment>
<evidence type="ECO:0000250" key="1"/>
<evidence type="ECO:0000305" key="2"/>